<reference key="1">
    <citation type="journal article" date="2005" name="PLoS Biol.">
        <title>The genome sequence of Rickettsia felis identifies the first putative conjugative plasmid in an obligate intracellular parasite.</title>
        <authorList>
            <person name="Ogata H."/>
            <person name="Renesto P."/>
            <person name="Audic S."/>
            <person name="Robert C."/>
            <person name="Blanc G."/>
            <person name="Fournier P.-E."/>
            <person name="Parinello H."/>
            <person name="Claverie J.-M."/>
            <person name="Raoult D."/>
        </authorList>
    </citation>
    <scope>NUCLEOTIDE SEQUENCE [LARGE SCALE GENOMIC DNA]</scope>
    <source>
        <strain>ATCC VR-1525 / URRWXCal2</strain>
    </source>
</reference>
<accession>Q4UNE4</accession>
<name>Y063_RICFE</name>
<organism>
    <name type="scientific">Rickettsia felis (strain ATCC VR-1525 / URRWXCal2)</name>
    <name type="common">Rickettsia azadi</name>
    <dbReference type="NCBI Taxonomy" id="315456"/>
    <lineage>
        <taxon>Bacteria</taxon>
        <taxon>Pseudomonadati</taxon>
        <taxon>Pseudomonadota</taxon>
        <taxon>Alphaproteobacteria</taxon>
        <taxon>Rickettsiales</taxon>
        <taxon>Rickettsiaceae</taxon>
        <taxon>Rickettsieae</taxon>
        <taxon>Rickettsia</taxon>
        <taxon>spotted fever group</taxon>
    </lineage>
</organism>
<dbReference type="EMBL" id="CP000053">
    <property type="protein sequence ID" value="AAY60914.1"/>
    <property type="molecule type" value="Genomic_DNA"/>
</dbReference>
<dbReference type="SMR" id="Q4UNE4"/>
<dbReference type="STRING" id="315456.RF_0063"/>
<dbReference type="KEGG" id="rfe:RF_0063"/>
<dbReference type="HOGENOM" id="CLU_1184327_0_0_5"/>
<dbReference type="Proteomes" id="UP000008548">
    <property type="component" value="Chromosome"/>
</dbReference>
<dbReference type="Gene3D" id="1.25.40.20">
    <property type="entry name" value="Ankyrin repeat-containing domain"/>
    <property type="match status" value="1"/>
</dbReference>
<dbReference type="Gene3D" id="3.80.10.10">
    <property type="entry name" value="Ribonuclease Inhibitor"/>
    <property type="match status" value="1"/>
</dbReference>
<dbReference type="InterPro" id="IPR002110">
    <property type="entry name" value="Ankyrin_rpt"/>
</dbReference>
<dbReference type="InterPro" id="IPR036770">
    <property type="entry name" value="Ankyrin_rpt-contain_sf"/>
</dbReference>
<dbReference type="InterPro" id="IPR052201">
    <property type="entry name" value="LRR-containing_regulator"/>
</dbReference>
<dbReference type="InterPro" id="IPR032675">
    <property type="entry name" value="LRR_dom_sf"/>
</dbReference>
<dbReference type="PANTHER" id="PTHR24111:SF0">
    <property type="entry name" value="LEUCINE-RICH REPEAT-CONTAINING PROTEIN"/>
    <property type="match status" value="1"/>
</dbReference>
<dbReference type="PANTHER" id="PTHR24111">
    <property type="entry name" value="LEUCINE-RICH REPEAT-CONTAINING PROTEIN 34"/>
    <property type="match status" value="1"/>
</dbReference>
<dbReference type="Pfam" id="PF12796">
    <property type="entry name" value="Ank_2"/>
    <property type="match status" value="1"/>
</dbReference>
<dbReference type="SMART" id="SM00368">
    <property type="entry name" value="LRR_RI"/>
    <property type="match status" value="1"/>
</dbReference>
<dbReference type="SUPFAM" id="SSF48403">
    <property type="entry name" value="Ankyrin repeat"/>
    <property type="match status" value="1"/>
</dbReference>
<dbReference type="SUPFAM" id="SSF52047">
    <property type="entry name" value="RNI-like"/>
    <property type="match status" value="1"/>
</dbReference>
<dbReference type="PROSITE" id="PS50297">
    <property type="entry name" value="ANK_REP_REGION"/>
    <property type="match status" value="1"/>
</dbReference>
<protein>
    <recommendedName>
        <fullName>Putative ankyrin repeat protein RF_0063</fullName>
    </recommendedName>
</protein>
<gene>
    <name type="ordered locus">RF_0063</name>
</gene>
<sequence>MKELIEFLEKTGLKTEADSLRNGGTELNPQSNIGTLGAKKLAAALKDNKSLKYLNLIGSYIGEEGARALAEALKDNESLKELYLTPADISTVTLNRIKEYIQRNTDLYYKEQQQYNKQLISSIKANEIKQAESIIPFIDPKYSNSVDENNNTALHYAVDKNLEKLSISLINKMSIETISIGNMYNNTALHYATDNGLEVISWFLINNMTQKALDMVNTDGNTALDYAIHNRHLL</sequence>
<proteinExistence type="predicted"/>
<feature type="chain" id="PRO_0000281746" description="Putative ankyrin repeat protein RF_0063">
    <location>
        <begin position="1"/>
        <end position="234"/>
    </location>
</feature>
<feature type="repeat" description="ANK 1">
    <location>
        <begin position="149"/>
        <end position="180"/>
    </location>
</feature>
<feature type="repeat" description="ANK 2">
    <location>
        <begin position="184"/>
        <end position="213"/>
    </location>
</feature>
<keyword id="KW-0040">ANK repeat</keyword>
<keyword id="KW-0677">Repeat</keyword>